<accession>A5UL86</accession>
<proteinExistence type="inferred from homology"/>
<protein>
    <recommendedName>
        <fullName evidence="1">Large ribosomal subunit protein uL2</fullName>
    </recommendedName>
    <alternativeName>
        <fullName evidence="3">50S ribosomal protein L2</fullName>
    </alternativeName>
</protein>
<dbReference type="EMBL" id="CP000678">
    <property type="protein sequence ID" value="ABQ86964.1"/>
    <property type="molecule type" value="Genomic_DNA"/>
</dbReference>
<dbReference type="RefSeq" id="WP_004033206.1">
    <property type="nucleotide sequence ID" value="NZ_CP117965.1"/>
</dbReference>
<dbReference type="SMR" id="A5UL86"/>
<dbReference type="STRING" id="420247.Msm_0759"/>
<dbReference type="EnsemblBacteria" id="ABQ86964">
    <property type="protein sequence ID" value="ABQ86964"/>
    <property type="gene ID" value="Msm_0759"/>
</dbReference>
<dbReference type="KEGG" id="msi:Msm_0759"/>
<dbReference type="PATRIC" id="fig|420247.28.peg.756"/>
<dbReference type="eggNOG" id="arCOG04067">
    <property type="taxonomic scope" value="Archaea"/>
</dbReference>
<dbReference type="HOGENOM" id="CLU_036235_0_3_2"/>
<dbReference type="Proteomes" id="UP000001992">
    <property type="component" value="Chromosome"/>
</dbReference>
<dbReference type="GO" id="GO:0022625">
    <property type="term" value="C:cytosolic large ribosomal subunit"/>
    <property type="evidence" value="ECO:0007669"/>
    <property type="project" value="TreeGrafter"/>
</dbReference>
<dbReference type="GO" id="GO:0019843">
    <property type="term" value="F:rRNA binding"/>
    <property type="evidence" value="ECO:0007669"/>
    <property type="project" value="UniProtKB-UniRule"/>
</dbReference>
<dbReference type="GO" id="GO:0003735">
    <property type="term" value="F:structural constituent of ribosome"/>
    <property type="evidence" value="ECO:0007669"/>
    <property type="project" value="InterPro"/>
</dbReference>
<dbReference type="GO" id="GO:0002181">
    <property type="term" value="P:cytoplasmic translation"/>
    <property type="evidence" value="ECO:0007669"/>
    <property type="project" value="TreeGrafter"/>
</dbReference>
<dbReference type="FunFam" id="2.40.50.140:FF:000020">
    <property type="entry name" value="60S ribosomal protein L2"/>
    <property type="match status" value="1"/>
</dbReference>
<dbReference type="FunFam" id="4.10.950.10:FF:000002">
    <property type="entry name" value="60S ribosomal protein L2"/>
    <property type="match status" value="1"/>
</dbReference>
<dbReference type="Gene3D" id="2.30.30.30">
    <property type="match status" value="1"/>
</dbReference>
<dbReference type="Gene3D" id="2.40.50.140">
    <property type="entry name" value="Nucleic acid-binding proteins"/>
    <property type="match status" value="1"/>
</dbReference>
<dbReference type="Gene3D" id="4.10.950.10">
    <property type="entry name" value="Ribosomal protein L2, domain 3"/>
    <property type="match status" value="1"/>
</dbReference>
<dbReference type="HAMAP" id="MF_01320_A">
    <property type="entry name" value="Ribosomal_uL2_A"/>
    <property type="match status" value="1"/>
</dbReference>
<dbReference type="InterPro" id="IPR012340">
    <property type="entry name" value="NA-bd_OB-fold"/>
</dbReference>
<dbReference type="InterPro" id="IPR014722">
    <property type="entry name" value="Rib_uL2_dom2"/>
</dbReference>
<dbReference type="InterPro" id="IPR002171">
    <property type="entry name" value="Ribosomal_uL2"/>
</dbReference>
<dbReference type="InterPro" id="IPR023672">
    <property type="entry name" value="Ribosomal_uL2_arc_euk"/>
</dbReference>
<dbReference type="InterPro" id="IPR022669">
    <property type="entry name" value="Ribosomal_uL2_C"/>
</dbReference>
<dbReference type="InterPro" id="IPR014726">
    <property type="entry name" value="Ribosomal_uL2_dom3"/>
</dbReference>
<dbReference type="InterPro" id="IPR022666">
    <property type="entry name" value="Ribosomal_uL2_RNA-bd_dom"/>
</dbReference>
<dbReference type="InterPro" id="IPR008991">
    <property type="entry name" value="Translation_prot_SH3-like_sf"/>
</dbReference>
<dbReference type="NCBIfam" id="NF007180">
    <property type="entry name" value="PRK09612.1"/>
    <property type="match status" value="1"/>
</dbReference>
<dbReference type="PANTHER" id="PTHR13691:SF16">
    <property type="entry name" value="LARGE RIBOSOMAL SUBUNIT PROTEIN UL2"/>
    <property type="match status" value="1"/>
</dbReference>
<dbReference type="PANTHER" id="PTHR13691">
    <property type="entry name" value="RIBOSOMAL PROTEIN L2"/>
    <property type="match status" value="1"/>
</dbReference>
<dbReference type="Pfam" id="PF00181">
    <property type="entry name" value="Ribosomal_L2"/>
    <property type="match status" value="1"/>
</dbReference>
<dbReference type="Pfam" id="PF03947">
    <property type="entry name" value="Ribosomal_L2_C"/>
    <property type="match status" value="1"/>
</dbReference>
<dbReference type="PIRSF" id="PIRSF002158">
    <property type="entry name" value="Ribosomal_L2"/>
    <property type="match status" value="1"/>
</dbReference>
<dbReference type="SMART" id="SM01383">
    <property type="entry name" value="Ribosomal_L2"/>
    <property type="match status" value="1"/>
</dbReference>
<dbReference type="SMART" id="SM01382">
    <property type="entry name" value="Ribosomal_L2_C"/>
    <property type="match status" value="1"/>
</dbReference>
<dbReference type="SUPFAM" id="SSF50249">
    <property type="entry name" value="Nucleic acid-binding proteins"/>
    <property type="match status" value="1"/>
</dbReference>
<dbReference type="SUPFAM" id="SSF50104">
    <property type="entry name" value="Translation proteins SH3-like domain"/>
    <property type="match status" value="1"/>
</dbReference>
<comment type="function">
    <text evidence="1">One of the primary rRNA binding proteins. Required for association of the 30S and 50S subunits to form the 70S ribosome, for tRNA binding and peptide bond formation. It has been suggested to have peptidyltransferase activity; this is somewhat controversial. Makes several contacts with the 16S rRNA in the 70S ribosome.</text>
</comment>
<comment type="subunit">
    <text evidence="1">Part of the 50S ribosomal subunit. Forms a bridge to the 30S subunit in the 70S ribosome.</text>
</comment>
<comment type="similarity">
    <text evidence="1">Belongs to the universal ribosomal protein uL2 family.</text>
</comment>
<evidence type="ECO:0000255" key="1">
    <source>
        <dbReference type="HAMAP-Rule" id="MF_01320"/>
    </source>
</evidence>
<evidence type="ECO:0000256" key="2">
    <source>
        <dbReference type="SAM" id="MobiDB-lite"/>
    </source>
</evidence>
<evidence type="ECO:0000305" key="3"/>
<sequence length="241" mass="26300">MGKRLIIQRRGRGTPAHRVASHRFKDKIRYRSYDALEKEGSIKGIVTDIVHDPARTAPIAEVKFENGEKKFILAPESIQIDDEIECGISAPIKFGNTLPLAEIPEGTPIYDIENTPGDGGRFVRSSGTYASLITHDANQSVVELPSGELKYLNPRCRASIGVVAGGGRKEKPFLKAGNRWHAYKAKGKKFMTVRGVAMNAVDHPHGGGNRQHPGRPTTVSRHAPPGRKVGSIAAKRTGLKR</sequence>
<keyword id="KW-0687">Ribonucleoprotein</keyword>
<keyword id="KW-0689">Ribosomal protein</keyword>
<keyword id="KW-0694">RNA-binding</keyword>
<keyword id="KW-0699">rRNA-binding</keyword>
<reference key="1">
    <citation type="journal article" date="2007" name="Proc. Natl. Acad. Sci. U.S.A.">
        <title>Genomic and metabolic adaptations of Methanobrevibacter smithii to the human gut.</title>
        <authorList>
            <person name="Samuel B.S."/>
            <person name="Hansen E.E."/>
            <person name="Manchester J.K."/>
            <person name="Coutinho P.M."/>
            <person name="Henrissat B."/>
            <person name="Fulton R."/>
            <person name="Latreille P."/>
            <person name="Kim K."/>
            <person name="Wilson R.K."/>
            <person name="Gordon J.I."/>
        </authorList>
    </citation>
    <scope>NUCLEOTIDE SEQUENCE [LARGE SCALE GENOMIC DNA]</scope>
    <source>
        <strain>ATCC 35061 / DSM 861 / OCM 144 / PS</strain>
    </source>
</reference>
<gene>
    <name evidence="1" type="primary">rpl2</name>
    <name type="ordered locus">Msm_0759</name>
</gene>
<name>RL2_METS3</name>
<organism>
    <name type="scientific">Methanobrevibacter smithii (strain ATCC 35061 / DSM 861 / OCM 144 / PS)</name>
    <dbReference type="NCBI Taxonomy" id="420247"/>
    <lineage>
        <taxon>Archaea</taxon>
        <taxon>Methanobacteriati</taxon>
        <taxon>Methanobacteriota</taxon>
        <taxon>Methanomada group</taxon>
        <taxon>Methanobacteria</taxon>
        <taxon>Methanobacteriales</taxon>
        <taxon>Methanobacteriaceae</taxon>
        <taxon>Methanobrevibacter</taxon>
    </lineage>
</organism>
<feature type="chain" id="PRO_0000310046" description="Large ribosomal subunit protein uL2">
    <location>
        <begin position="1"/>
        <end position="241"/>
    </location>
</feature>
<feature type="region of interest" description="Disordered" evidence="2">
    <location>
        <begin position="201"/>
        <end position="241"/>
    </location>
</feature>